<sequence>MAAAAPAAAASPEAPAVSGSADPETGDEDSREVRVLQSLRGRIYEAKNLLPYLGPNKMRDCFCTINLDQEEVYRTQVVEKSLSPYFSEEFYFEIPRTFQYLSFYVYDKNVLQRDLRIGKVAIKKEDLCSHSGKETWFSLQPIDSNSEVQGKVHLELRLNELITENGTVCQQLVVHIKACHGLPLINGQSCDPYATVSLVGPSRNDQKKTKVKKKTSNPQFNEVFYFEVTRSSSYSRKSQFQVEEEDIEKLEIRIDLWNNENLVQDVFLGEIKVPVNVLRSDSFHQAWYLLQPRDNGNKSSKTDDLGSLLLTLCYTEDCVLPSEYYGPLKTLLLKSPDVQPVSASAAYILGEICQDQKDAVLPLVRLLLHHNKLVPFITAVAELDLKDTPDANAIFRGNSLATQCLTEMMKIVGGHYLKVTLKPVLDEICESSKSCEIDPVKLKEGDNVENNKENLYYYVDKVFNTIVGSSVSCPTVMCDIFYSLRQMAAKKFPNHPHVQYSAVSSFVFLRFFAVAILSPHAFHLRPHYPDTQTVRTLTLISKTIQIIGNWGCQSRKKSRFKKSVMCEFLKMFQEERYFTDVKKFLDEISSTETKESSGTSEPVHLKEGEMYKRAQGRTRIGKKNFKKRWFCLTSRELTYHRQQGKDAIYTIPVKNILAVEKLEEGSFNKKNMFQVIHTEKTLYIQANNCVEANEWIDVLCRVSRCNHNRLSSFHPSAYLNGNWLCCQETSESTPGCKPCTAGIPADIQIDIDEDRETERIYSIFTLSLLKLQKMEETCGSIAVYQGPQKEPGYSKFTIEDSVATFKTIQQIKSTIEKLDEPHEKYRKKRSSSAKYGSKENPIVGKIS</sequence>
<reference key="1">
    <citation type="journal article" date="1996" name="J. Biol. Chem.">
        <title>Structure-function relationships of the mouse Gap1m: determination of the inositol 1,3,4,5-tetrakisphosphate-binding domain.</title>
        <authorList>
            <person name="Fukuda M."/>
            <person name="Mikoshiba K."/>
        </authorList>
    </citation>
    <scope>NUCLEOTIDE SEQUENCE [MRNA]</scope>
    <scope>MUTAGENESIS OF 626-LYS--ARG-628 AND ARG-628</scope>
    <source>
        <tissue>Brain</tissue>
    </source>
</reference>
<reference key="2">
    <citation type="journal article" date="2009" name="PLoS Biol.">
        <title>Lineage-specific biology revealed by a finished genome assembly of the mouse.</title>
        <authorList>
            <person name="Church D.M."/>
            <person name="Goodstadt L."/>
            <person name="Hillier L.W."/>
            <person name="Zody M.C."/>
            <person name="Goldstein S."/>
            <person name="She X."/>
            <person name="Bult C.J."/>
            <person name="Agarwala R."/>
            <person name="Cherry J.L."/>
            <person name="DiCuccio M."/>
            <person name="Hlavina W."/>
            <person name="Kapustin Y."/>
            <person name="Meric P."/>
            <person name="Maglott D."/>
            <person name="Birtle Z."/>
            <person name="Marques A.C."/>
            <person name="Graves T."/>
            <person name="Zhou S."/>
            <person name="Teague B."/>
            <person name="Potamousis K."/>
            <person name="Churas C."/>
            <person name="Place M."/>
            <person name="Herschleb J."/>
            <person name="Runnheim R."/>
            <person name="Forrest D."/>
            <person name="Amos-Landgraf J."/>
            <person name="Schwartz D.C."/>
            <person name="Cheng Z."/>
            <person name="Lindblad-Toh K."/>
            <person name="Eichler E.E."/>
            <person name="Ponting C.P."/>
        </authorList>
    </citation>
    <scope>NUCLEOTIDE SEQUENCE [LARGE SCALE GENOMIC DNA]</scope>
    <source>
        <strain>C57BL/6J</strain>
    </source>
</reference>
<reference key="3">
    <citation type="submission" date="2005-07" db="EMBL/GenBank/DDBJ databases">
        <authorList>
            <person name="Mural R.J."/>
            <person name="Adams M.D."/>
            <person name="Myers E.W."/>
            <person name="Smith H.O."/>
            <person name="Venter J.C."/>
        </authorList>
    </citation>
    <scope>NUCLEOTIDE SEQUENCE [LARGE SCALE GENOMIC DNA]</scope>
</reference>
<reference key="4">
    <citation type="journal article" date="2010" name="Cell">
        <title>A tissue-specific atlas of mouse protein phosphorylation and expression.</title>
        <authorList>
            <person name="Huttlin E.L."/>
            <person name="Jedrychowski M.P."/>
            <person name="Elias J.E."/>
            <person name="Goswami T."/>
            <person name="Rad R."/>
            <person name="Beausoleil S.A."/>
            <person name="Villen J."/>
            <person name="Haas W."/>
            <person name="Sowa M.E."/>
            <person name="Gygi S.P."/>
        </authorList>
    </citation>
    <scope>PHOSPHORYLATION [LARGE SCALE ANALYSIS] AT SER-554</scope>
    <scope>IDENTIFICATION BY MASS SPECTROMETRY [LARGE SCALE ANALYSIS]</scope>
    <source>
        <tissue>Brain</tissue>
        <tissue>Kidney</tissue>
        <tissue>Lung</tissue>
        <tissue>Testis</tissue>
    </source>
</reference>
<dbReference type="EMBL" id="AB056433">
    <property type="protein sequence ID" value="BAB32975.1"/>
    <property type="molecule type" value="mRNA"/>
</dbReference>
<dbReference type="EMBL" id="AC144935">
    <property type="status" value="NOT_ANNOTATED_CDS"/>
    <property type="molecule type" value="Genomic_DNA"/>
</dbReference>
<dbReference type="EMBL" id="AC161257">
    <property type="status" value="NOT_ANNOTATED_CDS"/>
    <property type="molecule type" value="Genomic_DNA"/>
</dbReference>
<dbReference type="EMBL" id="CH466560">
    <property type="protein sequence ID" value="EDL20956.1"/>
    <property type="molecule type" value="Genomic_DNA"/>
</dbReference>
<dbReference type="CCDS" id="CCDS23416.1"/>
<dbReference type="RefSeq" id="NP_444498.2">
    <property type="nucleotide sequence ID" value="NM_053268.2"/>
</dbReference>
<dbReference type="SMR" id="P58069"/>
<dbReference type="BioGRID" id="227827">
    <property type="interactions" value="1"/>
</dbReference>
<dbReference type="FunCoup" id="P58069">
    <property type="interactions" value="2046"/>
</dbReference>
<dbReference type="STRING" id="10090.ENSMUSP00000034984"/>
<dbReference type="GlyGen" id="P58069">
    <property type="glycosylation" value="1 site"/>
</dbReference>
<dbReference type="iPTMnet" id="P58069"/>
<dbReference type="PhosphoSitePlus" id="P58069"/>
<dbReference type="PaxDb" id="10090-ENSMUSP00000034984"/>
<dbReference type="PeptideAtlas" id="P58069"/>
<dbReference type="ProteomicsDB" id="300352"/>
<dbReference type="Pumba" id="P58069"/>
<dbReference type="Antibodypedia" id="18019">
    <property type="antibodies" value="53 antibodies from 19 providers"/>
</dbReference>
<dbReference type="DNASU" id="114713"/>
<dbReference type="Ensembl" id="ENSMUST00000034984.8">
    <property type="protein sequence ID" value="ENSMUSP00000034984.7"/>
    <property type="gene ID" value="ENSMUSG00000032413.13"/>
</dbReference>
<dbReference type="GeneID" id="114713"/>
<dbReference type="KEGG" id="mmu:114713"/>
<dbReference type="UCSC" id="uc009rcn.1">
    <property type="organism name" value="mouse"/>
</dbReference>
<dbReference type="AGR" id="MGI:2149960"/>
<dbReference type="CTD" id="5922"/>
<dbReference type="MGI" id="MGI:2149960">
    <property type="gene designation" value="Rasa2"/>
</dbReference>
<dbReference type="VEuPathDB" id="HostDB:ENSMUSG00000032413"/>
<dbReference type="eggNOG" id="KOG2059">
    <property type="taxonomic scope" value="Eukaryota"/>
</dbReference>
<dbReference type="GeneTree" id="ENSGT00940000158201"/>
<dbReference type="HOGENOM" id="CLU_008096_1_1_1"/>
<dbReference type="InParanoid" id="P58069"/>
<dbReference type="OMA" id="HVKACHG"/>
<dbReference type="OrthoDB" id="1562946at2759"/>
<dbReference type="PhylomeDB" id="P58069"/>
<dbReference type="TreeFam" id="TF105302"/>
<dbReference type="Reactome" id="R-MMU-5658442">
    <property type="pathway name" value="Regulation of RAS by GAPs"/>
</dbReference>
<dbReference type="BioGRID-ORCS" id="114713">
    <property type="hits" value="9 hits in 81 CRISPR screens"/>
</dbReference>
<dbReference type="ChiTaRS" id="Rasa2">
    <property type="organism name" value="mouse"/>
</dbReference>
<dbReference type="PRO" id="PR:P58069"/>
<dbReference type="Proteomes" id="UP000000589">
    <property type="component" value="Chromosome 9"/>
</dbReference>
<dbReference type="RNAct" id="P58069">
    <property type="molecule type" value="protein"/>
</dbReference>
<dbReference type="Bgee" id="ENSMUSG00000032413">
    <property type="expression patterns" value="Expressed in rostral migratory stream and 249 other cell types or tissues"/>
</dbReference>
<dbReference type="ExpressionAtlas" id="P58069">
    <property type="expression patterns" value="baseline and differential"/>
</dbReference>
<dbReference type="GO" id="GO:0005886">
    <property type="term" value="C:plasma membrane"/>
    <property type="evidence" value="ECO:0007669"/>
    <property type="project" value="UniProtKB-SubCell"/>
</dbReference>
<dbReference type="GO" id="GO:0005096">
    <property type="term" value="F:GTPase activator activity"/>
    <property type="evidence" value="ECO:0007669"/>
    <property type="project" value="UniProtKB-KW"/>
</dbReference>
<dbReference type="GO" id="GO:0005543">
    <property type="term" value="F:phospholipid binding"/>
    <property type="evidence" value="ECO:0007669"/>
    <property type="project" value="InterPro"/>
</dbReference>
<dbReference type="GO" id="GO:0008270">
    <property type="term" value="F:zinc ion binding"/>
    <property type="evidence" value="ECO:0007669"/>
    <property type="project" value="UniProtKB-KW"/>
</dbReference>
<dbReference type="GO" id="GO:0035556">
    <property type="term" value="P:intracellular signal transduction"/>
    <property type="evidence" value="ECO:0007669"/>
    <property type="project" value="InterPro"/>
</dbReference>
<dbReference type="GO" id="GO:0046580">
    <property type="term" value="P:negative regulation of Ras protein signal transduction"/>
    <property type="evidence" value="ECO:0007669"/>
    <property type="project" value="InterPro"/>
</dbReference>
<dbReference type="CDD" id="cd08401">
    <property type="entry name" value="C2A_RasA2_RasA3"/>
    <property type="match status" value="1"/>
</dbReference>
<dbReference type="CDD" id="cd04010">
    <property type="entry name" value="C2B_RasA3"/>
    <property type="match status" value="1"/>
</dbReference>
<dbReference type="CDD" id="cd13370">
    <property type="entry name" value="PH_GAP1m_mammal-like"/>
    <property type="match status" value="1"/>
</dbReference>
<dbReference type="FunFam" id="1.10.506.10:FF:000011">
    <property type="entry name" value="Ras GTPase-activating protein 2 isoform 3"/>
    <property type="match status" value="1"/>
</dbReference>
<dbReference type="FunFam" id="2.30.29.30:FF:000144">
    <property type="entry name" value="Ras GTPase-activating protein 2 isoform 3"/>
    <property type="match status" value="1"/>
</dbReference>
<dbReference type="FunFam" id="2.60.40.150:FF:000086">
    <property type="entry name" value="Ras GTPase-activating protein 2 isoform 3"/>
    <property type="match status" value="1"/>
</dbReference>
<dbReference type="FunFam" id="2.60.40.150:FF:000069">
    <property type="entry name" value="Ras GTPase-activating protein 4 isoform 1"/>
    <property type="match status" value="1"/>
</dbReference>
<dbReference type="Gene3D" id="2.60.40.150">
    <property type="entry name" value="C2 domain"/>
    <property type="match status" value="2"/>
</dbReference>
<dbReference type="Gene3D" id="1.10.506.10">
    <property type="entry name" value="GTPase Activation - p120gap, domain 1"/>
    <property type="match status" value="1"/>
</dbReference>
<dbReference type="Gene3D" id="2.30.29.30">
    <property type="entry name" value="Pleckstrin-homology domain (PH domain)/Phosphotyrosine-binding domain (PTB)"/>
    <property type="match status" value="1"/>
</dbReference>
<dbReference type="InterPro" id="IPR000008">
    <property type="entry name" value="C2_dom"/>
</dbReference>
<dbReference type="InterPro" id="IPR035892">
    <property type="entry name" value="C2_domain_sf"/>
</dbReference>
<dbReference type="InterPro" id="IPR011993">
    <property type="entry name" value="PH-like_dom_sf"/>
</dbReference>
<dbReference type="InterPro" id="IPR001849">
    <property type="entry name" value="PH_domain"/>
</dbReference>
<dbReference type="InterPro" id="IPR039360">
    <property type="entry name" value="Ras_GTPase"/>
</dbReference>
<dbReference type="InterPro" id="IPR037773">
    <property type="entry name" value="RASA2_PH"/>
</dbReference>
<dbReference type="InterPro" id="IPR023152">
    <property type="entry name" value="RasGAP_CS"/>
</dbReference>
<dbReference type="InterPro" id="IPR001936">
    <property type="entry name" value="RasGAP_dom"/>
</dbReference>
<dbReference type="InterPro" id="IPR008936">
    <property type="entry name" value="Rho_GTPase_activation_prot"/>
</dbReference>
<dbReference type="InterPro" id="IPR001562">
    <property type="entry name" value="Znf_Btk_motif"/>
</dbReference>
<dbReference type="PANTHER" id="PTHR10194:SF21">
    <property type="entry name" value="RAS GTPASE-ACTIVATING PROTEIN 2"/>
    <property type="match status" value="1"/>
</dbReference>
<dbReference type="PANTHER" id="PTHR10194">
    <property type="entry name" value="RAS GTPASE-ACTIVATING PROTEINS"/>
    <property type="match status" value="1"/>
</dbReference>
<dbReference type="Pfam" id="PF00779">
    <property type="entry name" value="BTK"/>
    <property type="match status" value="1"/>
</dbReference>
<dbReference type="Pfam" id="PF00168">
    <property type="entry name" value="C2"/>
    <property type="match status" value="2"/>
</dbReference>
<dbReference type="Pfam" id="PF00169">
    <property type="entry name" value="PH"/>
    <property type="match status" value="1"/>
</dbReference>
<dbReference type="Pfam" id="PF00616">
    <property type="entry name" value="RasGAP"/>
    <property type="match status" value="1"/>
</dbReference>
<dbReference type="PRINTS" id="PR00402">
    <property type="entry name" value="TECBTKDOMAIN"/>
</dbReference>
<dbReference type="SMART" id="SM00107">
    <property type="entry name" value="BTK"/>
    <property type="match status" value="1"/>
</dbReference>
<dbReference type="SMART" id="SM00239">
    <property type="entry name" value="C2"/>
    <property type="match status" value="2"/>
</dbReference>
<dbReference type="SMART" id="SM00233">
    <property type="entry name" value="PH"/>
    <property type="match status" value="1"/>
</dbReference>
<dbReference type="SMART" id="SM00323">
    <property type="entry name" value="RasGAP"/>
    <property type="match status" value="1"/>
</dbReference>
<dbReference type="SUPFAM" id="SSF49562">
    <property type="entry name" value="C2 domain (Calcium/lipid-binding domain, CaLB)"/>
    <property type="match status" value="2"/>
</dbReference>
<dbReference type="SUPFAM" id="SSF48350">
    <property type="entry name" value="GTPase activation domain, GAP"/>
    <property type="match status" value="1"/>
</dbReference>
<dbReference type="SUPFAM" id="SSF50729">
    <property type="entry name" value="PH domain-like"/>
    <property type="match status" value="1"/>
</dbReference>
<dbReference type="PROSITE" id="PS50004">
    <property type="entry name" value="C2"/>
    <property type="match status" value="2"/>
</dbReference>
<dbReference type="PROSITE" id="PS50003">
    <property type="entry name" value="PH_DOMAIN"/>
    <property type="match status" value="1"/>
</dbReference>
<dbReference type="PROSITE" id="PS00509">
    <property type="entry name" value="RAS_GTPASE_ACTIV_1"/>
    <property type="match status" value="1"/>
</dbReference>
<dbReference type="PROSITE" id="PS50018">
    <property type="entry name" value="RAS_GTPASE_ACTIV_2"/>
    <property type="match status" value="1"/>
</dbReference>
<dbReference type="PROSITE" id="PS51113">
    <property type="entry name" value="ZF_BTK"/>
    <property type="match status" value="1"/>
</dbReference>
<gene>
    <name type="primary">Rasa2</name>
</gene>
<proteinExistence type="evidence at protein level"/>
<protein>
    <recommendedName>
        <fullName>Ras GTPase-activating protein 2</fullName>
    </recommendedName>
    <alternativeName>
        <fullName>GAP1m</fullName>
    </alternativeName>
</protein>
<organism>
    <name type="scientific">Mus musculus</name>
    <name type="common">Mouse</name>
    <dbReference type="NCBI Taxonomy" id="10090"/>
    <lineage>
        <taxon>Eukaryota</taxon>
        <taxon>Metazoa</taxon>
        <taxon>Chordata</taxon>
        <taxon>Craniata</taxon>
        <taxon>Vertebrata</taxon>
        <taxon>Euteleostomi</taxon>
        <taxon>Mammalia</taxon>
        <taxon>Eutheria</taxon>
        <taxon>Euarchontoglires</taxon>
        <taxon>Glires</taxon>
        <taxon>Rodentia</taxon>
        <taxon>Myomorpha</taxon>
        <taxon>Muroidea</taxon>
        <taxon>Muridae</taxon>
        <taxon>Murinae</taxon>
        <taxon>Mus</taxon>
        <taxon>Mus</taxon>
    </lineage>
</organism>
<accession>P58069</accession>
<accession>G3X918</accession>
<evidence type="ECO:0000250" key="1">
    <source>
        <dbReference type="UniProtKB" id="Q15283"/>
    </source>
</evidence>
<evidence type="ECO:0000255" key="2">
    <source>
        <dbReference type="PROSITE-ProRule" id="PRU00041"/>
    </source>
</evidence>
<evidence type="ECO:0000255" key="3">
    <source>
        <dbReference type="PROSITE-ProRule" id="PRU00145"/>
    </source>
</evidence>
<evidence type="ECO:0000255" key="4">
    <source>
        <dbReference type="PROSITE-ProRule" id="PRU00167"/>
    </source>
</evidence>
<evidence type="ECO:0000255" key="5">
    <source>
        <dbReference type="PROSITE-ProRule" id="PRU00432"/>
    </source>
</evidence>
<evidence type="ECO:0000256" key="6">
    <source>
        <dbReference type="SAM" id="MobiDB-lite"/>
    </source>
</evidence>
<evidence type="ECO:0000269" key="7">
    <source>
    </source>
</evidence>
<evidence type="ECO:0000305" key="8"/>
<evidence type="ECO:0007744" key="9">
    <source>
    </source>
</evidence>
<feature type="initiator methionine" description="Removed" evidence="1">
    <location>
        <position position="1"/>
    </location>
</feature>
<feature type="chain" id="PRO_0000056639" description="Ras GTPase-activating protein 2">
    <location>
        <begin position="2"/>
        <end position="847"/>
    </location>
</feature>
<feature type="domain" description="C2 1" evidence="2">
    <location>
        <begin position="19"/>
        <end position="137"/>
    </location>
</feature>
<feature type="domain" description="C2 2" evidence="2">
    <location>
        <begin position="148"/>
        <end position="288"/>
    </location>
</feature>
<feature type="domain" description="Ras-GAP" evidence="4">
    <location>
        <begin position="371"/>
        <end position="588"/>
    </location>
</feature>
<feature type="domain" description="PH" evidence="3">
    <location>
        <begin position="603"/>
        <end position="704"/>
    </location>
</feature>
<feature type="zinc finger region" description="Btk-type" evidence="5">
    <location>
        <begin position="706"/>
        <end position="742"/>
    </location>
</feature>
<feature type="region of interest" description="Disordered" evidence="6">
    <location>
        <begin position="1"/>
        <end position="31"/>
    </location>
</feature>
<feature type="region of interest" description="Disordered" evidence="6">
    <location>
        <begin position="819"/>
        <end position="847"/>
    </location>
</feature>
<feature type="compositionally biased region" description="Low complexity" evidence="6">
    <location>
        <begin position="1"/>
        <end position="21"/>
    </location>
</feature>
<feature type="binding site" evidence="5">
    <location>
        <position position="714"/>
    </location>
    <ligand>
        <name>Zn(2+)</name>
        <dbReference type="ChEBI" id="CHEBI:29105"/>
    </ligand>
</feature>
<feature type="binding site" evidence="5">
    <location>
        <position position="725"/>
    </location>
    <ligand>
        <name>Zn(2+)</name>
        <dbReference type="ChEBI" id="CHEBI:29105"/>
    </ligand>
</feature>
<feature type="binding site" evidence="5">
    <location>
        <position position="726"/>
    </location>
    <ligand>
        <name>Zn(2+)</name>
        <dbReference type="ChEBI" id="CHEBI:29105"/>
    </ligand>
</feature>
<feature type="binding site" evidence="5">
    <location>
        <position position="736"/>
    </location>
    <ligand>
        <name>Zn(2+)</name>
        <dbReference type="ChEBI" id="CHEBI:29105"/>
    </ligand>
</feature>
<feature type="site" description="Arginine finger; crucial for GTP hydrolysis by stabilizing the transition state" evidence="4">
    <location>
        <position position="396"/>
    </location>
</feature>
<feature type="modified residue" description="N-acetylalanine" evidence="1">
    <location>
        <position position="2"/>
    </location>
</feature>
<feature type="modified residue" description="Phosphoserine" evidence="9">
    <location>
        <position position="554"/>
    </location>
</feature>
<feature type="mutagenesis site" description="No binding to IP4, reduced binding to phospholipids." evidence="7">
    <original>KKR</original>
    <variation>QQQ</variation>
    <location>
        <begin position="626"/>
        <end position="628"/>
    </location>
</feature>
<feature type="mutagenesis site" description="Greatly reduced binding to IP4 and to phospholipids." evidence="7">
    <original>R</original>
    <variation>C</variation>
    <location>
        <position position="628"/>
    </location>
</feature>
<feature type="sequence conflict" description="In Ref. 1; BAB32975." evidence="8" ref="1">
    <original>S</original>
    <variation>AS</variation>
    <location>
        <position position="11"/>
    </location>
</feature>
<keyword id="KW-0007">Acetylation</keyword>
<keyword id="KW-1003">Cell membrane</keyword>
<keyword id="KW-0343">GTPase activation</keyword>
<keyword id="KW-0472">Membrane</keyword>
<keyword id="KW-0479">Metal-binding</keyword>
<keyword id="KW-0597">Phosphoprotein</keyword>
<keyword id="KW-1185">Reference proteome</keyword>
<keyword id="KW-0677">Repeat</keyword>
<keyword id="KW-0862">Zinc</keyword>
<keyword id="KW-0863">Zinc-finger</keyword>
<name>RASA2_MOUSE</name>
<comment type="function">
    <text>Inhibitory regulator of the Ras-cyclic AMP pathway. Binds inositol tetrakisphosphate (IP4) and phospholipids.</text>
</comment>
<comment type="subcellular location">
    <subcellularLocation>
        <location evidence="8">Cell membrane</location>
    </subcellularLocation>
</comment>